<sequence length="11" mass="1105">GSTGLIPFGRT</sequence>
<name>PVK1_PERSR</name>
<comment type="function">
    <text evidence="4">Mediates visceral muscle contractile activity (myotropic activity).</text>
</comment>
<comment type="subcellular location">
    <subcellularLocation>
        <location evidence="4">Secreted</location>
    </subcellularLocation>
</comment>
<comment type="similarity">
    <text evidence="1">Belongs to the periviscerokinin family.</text>
</comment>
<dbReference type="GO" id="GO:0005576">
    <property type="term" value="C:extracellular region"/>
    <property type="evidence" value="ECO:0007669"/>
    <property type="project" value="UniProtKB-SubCell"/>
</dbReference>
<dbReference type="GO" id="GO:0007218">
    <property type="term" value="P:neuropeptide signaling pathway"/>
    <property type="evidence" value="ECO:0007669"/>
    <property type="project" value="UniProtKB-KW"/>
</dbReference>
<dbReference type="InterPro" id="IPR013231">
    <property type="entry name" value="Periviscerokinin"/>
</dbReference>
<dbReference type="Pfam" id="PF08259">
    <property type="entry name" value="Periviscerokin"/>
    <property type="match status" value="1"/>
</dbReference>
<protein>
    <recommendedName>
        <fullName evidence="3">Periviscerokinin-1</fullName>
        <shortName evidence="3">PerSu-PVK-1</shortName>
    </recommendedName>
</protein>
<evidence type="ECO:0000255" key="1"/>
<evidence type="ECO:0000269" key="2">
    <source>
    </source>
</evidence>
<evidence type="ECO:0000303" key="3">
    <source>
    </source>
</evidence>
<evidence type="ECO:0000305" key="4"/>
<feature type="peptide" id="PRO_0000378761" description="Periviscerokinin-1" evidence="2">
    <location>
        <begin position="1"/>
        <end position="11"/>
    </location>
</feature>
<feature type="modified residue" description="Threonine amide" evidence="2">
    <location>
        <position position="11"/>
    </location>
</feature>
<organism>
    <name type="scientific">Perisphaeria cf. substylifera (strain SR-2005)</name>
    <name type="common">Cockroach</name>
    <dbReference type="NCBI Taxonomy" id="348760"/>
    <lineage>
        <taxon>Eukaryota</taxon>
        <taxon>Metazoa</taxon>
        <taxon>Ecdysozoa</taxon>
        <taxon>Arthropoda</taxon>
        <taxon>Hexapoda</taxon>
        <taxon>Insecta</taxon>
        <taxon>Pterygota</taxon>
        <taxon>Neoptera</taxon>
        <taxon>Polyneoptera</taxon>
        <taxon>Dictyoptera</taxon>
        <taxon>Blattodea</taxon>
        <taxon>Blaberoidea</taxon>
        <taxon>Blaberidae</taxon>
        <taxon>Perisphaerinae</taxon>
        <taxon>Perisphaeria</taxon>
    </lineage>
</organism>
<keyword id="KW-0027">Amidation</keyword>
<keyword id="KW-0903">Direct protein sequencing</keyword>
<keyword id="KW-0527">Neuropeptide</keyword>
<keyword id="KW-0964">Secreted</keyword>
<reference evidence="4" key="1">
    <citation type="journal article" date="2009" name="BMC Evol. Biol.">
        <title>A proteomic approach for studying insect phylogeny: CAPA peptides of ancient insect taxa (Dictyoptera, Blattoptera) as a test case.</title>
        <authorList>
            <person name="Roth S."/>
            <person name="Fromm B."/>
            <person name="Gaede G."/>
            <person name="Predel R."/>
        </authorList>
    </citation>
    <scope>PROTEIN SEQUENCE</scope>
    <scope>AMIDATION AT THR-11</scope>
    <source>
        <tissue evidence="2">Abdominal perisympathetic organs</tissue>
    </source>
</reference>
<proteinExistence type="evidence at protein level"/>
<accession>P85727</accession>